<dbReference type="EC" id="6.1.1.15" evidence="1"/>
<dbReference type="EMBL" id="AE016879">
    <property type="protein sequence ID" value="AAP27686.1"/>
    <property type="molecule type" value="Genomic_DNA"/>
</dbReference>
<dbReference type="EMBL" id="AE017225">
    <property type="protein sequence ID" value="AAT55972.1"/>
    <property type="molecule type" value="Genomic_DNA"/>
</dbReference>
<dbReference type="EMBL" id="AE017334">
    <property type="protein sequence ID" value="AAT33071.1"/>
    <property type="molecule type" value="Genomic_DNA"/>
</dbReference>
<dbReference type="RefSeq" id="NP_846200.1">
    <property type="nucleotide sequence ID" value="NC_003997.3"/>
</dbReference>
<dbReference type="RefSeq" id="WP_000814312.1">
    <property type="nucleotide sequence ID" value="NZ_WXXJ01000026.1"/>
</dbReference>
<dbReference type="RefSeq" id="YP_029921.1">
    <property type="nucleotide sequence ID" value="NC_005945.1"/>
</dbReference>
<dbReference type="SMR" id="Q81WL6"/>
<dbReference type="STRING" id="261594.GBAA_3957"/>
<dbReference type="DNASU" id="1086582"/>
<dbReference type="GeneID" id="45023647"/>
<dbReference type="KEGG" id="ban:BA_3957"/>
<dbReference type="KEGG" id="bar:GBAA_3957"/>
<dbReference type="KEGG" id="bat:BAS3670"/>
<dbReference type="PATRIC" id="fig|198094.11.peg.3927"/>
<dbReference type="eggNOG" id="COG0442">
    <property type="taxonomic scope" value="Bacteria"/>
</dbReference>
<dbReference type="HOGENOM" id="CLU_016739_0_0_9"/>
<dbReference type="OMA" id="NCDYAAN"/>
<dbReference type="OrthoDB" id="9809052at2"/>
<dbReference type="Proteomes" id="UP000000427">
    <property type="component" value="Chromosome"/>
</dbReference>
<dbReference type="Proteomes" id="UP000000594">
    <property type="component" value="Chromosome"/>
</dbReference>
<dbReference type="GO" id="GO:0005829">
    <property type="term" value="C:cytosol"/>
    <property type="evidence" value="ECO:0007669"/>
    <property type="project" value="TreeGrafter"/>
</dbReference>
<dbReference type="GO" id="GO:0002161">
    <property type="term" value="F:aminoacyl-tRNA deacylase activity"/>
    <property type="evidence" value="ECO:0007669"/>
    <property type="project" value="InterPro"/>
</dbReference>
<dbReference type="GO" id="GO:0005524">
    <property type="term" value="F:ATP binding"/>
    <property type="evidence" value="ECO:0007669"/>
    <property type="project" value="UniProtKB-UniRule"/>
</dbReference>
<dbReference type="GO" id="GO:0140096">
    <property type="term" value="F:catalytic activity, acting on a protein"/>
    <property type="evidence" value="ECO:0007669"/>
    <property type="project" value="UniProtKB-ARBA"/>
</dbReference>
<dbReference type="GO" id="GO:0004827">
    <property type="term" value="F:proline-tRNA ligase activity"/>
    <property type="evidence" value="ECO:0007669"/>
    <property type="project" value="UniProtKB-UniRule"/>
</dbReference>
<dbReference type="GO" id="GO:0016740">
    <property type="term" value="F:transferase activity"/>
    <property type="evidence" value="ECO:0007669"/>
    <property type="project" value="UniProtKB-ARBA"/>
</dbReference>
<dbReference type="GO" id="GO:0006433">
    <property type="term" value="P:prolyl-tRNA aminoacylation"/>
    <property type="evidence" value="ECO:0007669"/>
    <property type="project" value="UniProtKB-UniRule"/>
</dbReference>
<dbReference type="CDD" id="cd04334">
    <property type="entry name" value="ProRS-INS"/>
    <property type="match status" value="1"/>
</dbReference>
<dbReference type="CDD" id="cd00861">
    <property type="entry name" value="ProRS_anticodon_short"/>
    <property type="match status" value="1"/>
</dbReference>
<dbReference type="CDD" id="cd00779">
    <property type="entry name" value="ProRS_core_prok"/>
    <property type="match status" value="1"/>
</dbReference>
<dbReference type="FunFam" id="3.30.930.10:FF:000043">
    <property type="entry name" value="Proline--tRNA ligase"/>
    <property type="match status" value="1"/>
</dbReference>
<dbReference type="FunFam" id="3.30.930.10:FF:000065">
    <property type="entry name" value="Proline--tRNA ligase"/>
    <property type="match status" value="1"/>
</dbReference>
<dbReference type="FunFam" id="3.40.50.800:FF:000011">
    <property type="entry name" value="Proline--tRNA ligase"/>
    <property type="match status" value="1"/>
</dbReference>
<dbReference type="Gene3D" id="3.40.50.800">
    <property type="entry name" value="Anticodon-binding domain"/>
    <property type="match status" value="1"/>
</dbReference>
<dbReference type="Gene3D" id="3.30.930.10">
    <property type="entry name" value="Bira Bifunctional Protein, Domain 2"/>
    <property type="match status" value="2"/>
</dbReference>
<dbReference type="HAMAP" id="MF_01569">
    <property type="entry name" value="Pro_tRNA_synth_type1"/>
    <property type="match status" value="1"/>
</dbReference>
<dbReference type="InterPro" id="IPR002314">
    <property type="entry name" value="aa-tRNA-synt_IIb"/>
</dbReference>
<dbReference type="InterPro" id="IPR006195">
    <property type="entry name" value="aa-tRNA-synth_II"/>
</dbReference>
<dbReference type="InterPro" id="IPR045864">
    <property type="entry name" value="aa-tRNA-synth_II/BPL/LPL"/>
</dbReference>
<dbReference type="InterPro" id="IPR004154">
    <property type="entry name" value="Anticodon-bd"/>
</dbReference>
<dbReference type="InterPro" id="IPR036621">
    <property type="entry name" value="Anticodon-bd_dom_sf"/>
</dbReference>
<dbReference type="InterPro" id="IPR002316">
    <property type="entry name" value="Pro-tRNA-ligase_IIa"/>
</dbReference>
<dbReference type="InterPro" id="IPR004500">
    <property type="entry name" value="Pro-tRNA-synth_IIa_bac-type"/>
</dbReference>
<dbReference type="InterPro" id="IPR023717">
    <property type="entry name" value="Pro-tRNA-Synthase_IIa_type1"/>
</dbReference>
<dbReference type="InterPro" id="IPR050062">
    <property type="entry name" value="Pro-tRNA_synthetase"/>
</dbReference>
<dbReference type="InterPro" id="IPR044140">
    <property type="entry name" value="ProRS_anticodon_short"/>
</dbReference>
<dbReference type="InterPro" id="IPR033730">
    <property type="entry name" value="ProRS_core_prok"/>
</dbReference>
<dbReference type="InterPro" id="IPR036754">
    <property type="entry name" value="YbaK/aa-tRNA-synt-asso_dom_sf"/>
</dbReference>
<dbReference type="InterPro" id="IPR007214">
    <property type="entry name" value="YbaK/aa-tRNA-synth-assoc-dom"/>
</dbReference>
<dbReference type="NCBIfam" id="NF006625">
    <property type="entry name" value="PRK09194.1"/>
    <property type="match status" value="1"/>
</dbReference>
<dbReference type="NCBIfam" id="TIGR00409">
    <property type="entry name" value="proS_fam_II"/>
    <property type="match status" value="1"/>
</dbReference>
<dbReference type="PANTHER" id="PTHR42753">
    <property type="entry name" value="MITOCHONDRIAL RIBOSOME PROTEIN L39/PROLYL-TRNA LIGASE FAMILY MEMBER"/>
    <property type="match status" value="1"/>
</dbReference>
<dbReference type="PANTHER" id="PTHR42753:SF2">
    <property type="entry name" value="PROLINE--TRNA LIGASE"/>
    <property type="match status" value="1"/>
</dbReference>
<dbReference type="Pfam" id="PF03129">
    <property type="entry name" value="HGTP_anticodon"/>
    <property type="match status" value="1"/>
</dbReference>
<dbReference type="Pfam" id="PF00587">
    <property type="entry name" value="tRNA-synt_2b"/>
    <property type="match status" value="1"/>
</dbReference>
<dbReference type="Pfam" id="PF04073">
    <property type="entry name" value="tRNA_edit"/>
    <property type="match status" value="1"/>
</dbReference>
<dbReference type="PIRSF" id="PIRSF001535">
    <property type="entry name" value="ProRS_1"/>
    <property type="match status" value="1"/>
</dbReference>
<dbReference type="PRINTS" id="PR01046">
    <property type="entry name" value="TRNASYNTHPRO"/>
</dbReference>
<dbReference type="SUPFAM" id="SSF52954">
    <property type="entry name" value="Class II aaRS ABD-related"/>
    <property type="match status" value="1"/>
</dbReference>
<dbReference type="SUPFAM" id="SSF55681">
    <property type="entry name" value="Class II aaRS and biotin synthetases"/>
    <property type="match status" value="1"/>
</dbReference>
<dbReference type="SUPFAM" id="SSF55826">
    <property type="entry name" value="YbaK/ProRS associated domain"/>
    <property type="match status" value="1"/>
</dbReference>
<dbReference type="PROSITE" id="PS50862">
    <property type="entry name" value="AA_TRNA_LIGASE_II"/>
    <property type="match status" value="1"/>
</dbReference>
<name>SYP1_BACAN</name>
<accession>Q81WL6</accession>
<accession>Q6HUR7</accession>
<accession>Q6KNZ8</accession>
<protein>
    <recommendedName>
        <fullName evidence="1">Proline--tRNA ligase 1</fullName>
        <ecNumber evidence="1">6.1.1.15</ecNumber>
    </recommendedName>
    <alternativeName>
        <fullName evidence="1">Prolyl-tRNA synthetase 1</fullName>
        <shortName evidence="1">ProRS 1</shortName>
    </alternativeName>
</protein>
<gene>
    <name evidence="1" type="primary">proS1</name>
    <name type="ordered locus">BA_3957</name>
    <name type="ordered locus">GBAA_3957</name>
    <name type="ordered locus">BAS3670</name>
</gene>
<evidence type="ECO:0000255" key="1">
    <source>
        <dbReference type="HAMAP-Rule" id="MF_01569"/>
    </source>
</evidence>
<organism>
    <name type="scientific">Bacillus anthracis</name>
    <dbReference type="NCBI Taxonomy" id="1392"/>
    <lineage>
        <taxon>Bacteria</taxon>
        <taxon>Bacillati</taxon>
        <taxon>Bacillota</taxon>
        <taxon>Bacilli</taxon>
        <taxon>Bacillales</taxon>
        <taxon>Bacillaceae</taxon>
        <taxon>Bacillus</taxon>
        <taxon>Bacillus cereus group</taxon>
    </lineage>
</organism>
<proteinExistence type="inferred from homology"/>
<reference key="1">
    <citation type="journal article" date="2003" name="Nature">
        <title>The genome sequence of Bacillus anthracis Ames and comparison to closely related bacteria.</title>
        <authorList>
            <person name="Read T.D."/>
            <person name="Peterson S.N."/>
            <person name="Tourasse N.J."/>
            <person name="Baillie L.W."/>
            <person name="Paulsen I.T."/>
            <person name="Nelson K.E."/>
            <person name="Tettelin H."/>
            <person name="Fouts D.E."/>
            <person name="Eisen J.A."/>
            <person name="Gill S.R."/>
            <person name="Holtzapple E.K."/>
            <person name="Okstad O.A."/>
            <person name="Helgason E."/>
            <person name="Rilstone J."/>
            <person name="Wu M."/>
            <person name="Kolonay J.F."/>
            <person name="Beanan M.J."/>
            <person name="Dodson R.J."/>
            <person name="Brinkac L.M."/>
            <person name="Gwinn M.L."/>
            <person name="DeBoy R.T."/>
            <person name="Madpu R."/>
            <person name="Daugherty S.C."/>
            <person name="Durkin A.S."/>
            <person name="Haft D.H."/>
            <person name="Nelson W.C."/>
            <person name="Peterson J.D."/>
            <person name="Pop M."/>
            <person name="Khouri H.M."/>
            <person name="Radune D."/>
            <person name="Benton J.L."/>
            <person name="Mahamoud Y."/>
            <person name="Jiang L."/>
            <person name="Hance I.R."/>
            <person name="Weidman J.F."/>
            <person name="Berry K.J."/>
            <person name="Plaut R.D."/>
            <person name="Wolf A.M."/>
            <person name="Watkins K.L."/>
            <person name="Nierman W.C."/>
            <person name="Hazen A."/>
            <person name="Cline R.T."/>
            <person name="Redmond C."/>
            <person name="Thwaite J.E."/>
            <person name="White O."/>
            <person name="Salzberg S.L."/>
            <person name="Thomason B."/>
            <person name="Friedlander A.M."/>
            <person name="Koehler T.M."/>
            <person name="Hanna P.C."/>
            <person name="Kolstoe A.-B."/>
            <person name="Fraser C.M."/>
        </authorList>
    </citation>
    <scope>NUCLEOTIDE SEQUENCE [LARGE SCALE GENOMIC DNA]</scope>
    <source>
        <strain>Ames / isolate Porton</strain>
    </source>
</reference>
<reference key="2">
    <citation type="submission" date="2004-01" db="EMBL/GenBank/DDBJ databases">
        <title>Complete genome sequence of Bacillus anthracis Sterne.</title>
        <authorList>
            <person name="Brettin T.S."/>
            <person name="Bruce D."/>
            <person name="Challacombe J.F."/>
            <person name="Gilna P."/>
            <person name="Han C."/>
            <person name="Hill K."/>
            <person name="Hitchcock P."/>
            <person name="Jackson P."/>
            <person name="Keim P."/>
            <person name="Longmire J."/>
            <person name="Lucas S."/>
            <person name="Okinaka R."/>
            <person name="Richardson P."/>
            <person name="Rubin E."/>
            <person name="Tice H."/>
        </authorList>
    </citation>
    <scope>NUCLEOTIDE SEQUENCE [LARGE SCALE GENOMIC DNA]</scope>
    <source>
        <strain>Sterne</strain>
    </source>
</reference>
<reference key="3">
    <citation type="journal article" date="2009" name="J. Bacteriol.">
        <title>The complete genome sequence of Bacillus anthracis Ames 'Ancestor'.</title>
        <authorList>
            <person name="Ravel J."/>
            <person name="Jiang L."/>
            <person name="Stanley S.T."/>
            <person name="Wilson M.R."/>
            <person name="Decker R.S."/>
            <person name="Read T.D."/>
            <person name="Worsham P."/>
            <person name="Keim P.S."/>
            <person name="Salzberg S.L."/>
            <person name="Fraser-Liggett C.M."/>
            <person name="Rasko D.A."/>
        </authorList>
    </citation>
    <scope>NUCLEOTIDE SEQUENCE [LARGE SCALE GENOMIC DNA]</scope>
    <source>
        <strain>Ames ancestor</strain>
    </source>
</reference>
<comment type="function">
    <text evidence="1">Catalyzes the attachment of proline to tRNA(Pro) in a two-step reaction: proline is first activated by ATP to form Pro-AMP and then transferred to the acceptor end of tRNA(Pro). As ProRS can inadvertently accommodate and process non-cognate amino acids such as alanine and cysteine, to avoid such errors it has two additional distinct editing activities against alanine. One activity is designated as 'pretransfer' editing and involves the tRNA(Pro)-independent hydrolysis of activated Ala-AMP. The other activity is designated 'posttransfer' editing and involves deacylation of mischarged Ala-tRNA(Pro). The misacylated Cys-tRNA(Pro) is not edited by ProRS.</text>
</comment>
<comment type="catalytic activity">
    <reaction evidence="1">
        <text>tRNA(Pro) + L-proline + ATP = L-prolyl-tRNA(Pro) + AMP + diphosphate</text>
        <dbReference type="Rhea" id="RHEA:14305"/>
        <dbReference type="Rhea" id="RHEA-COMP:9700"/>
        <dbReference type="Rhea" id="RHEA-COMP:9702"/>
        <dbReference type="ChEBI" id="CHEBI:30616"/>
        <dbReference type="ChEBI" id="CHEBI:33019"/>
        <dbReference type="ChEBI" id="CHEBI:60039"/>
        <dbReference type="ChEBI" id="CHEBI:78442"/>
        <dbReference type="ChEBI" id="CHEBI:78532"/>
        <dbReference type="ChEBI" id="CHEBI:456215"/>
        <dbReference type="EC" id="6.1.1.15"/>
    </reaction>
</comment>
<comment type="subunit">
    <text evidence="1">Homodimer.</text>
</comment>
<comment type="subcellular location">
    <subcellularLocation>
        <location evidence="1">Cytoplasm</location>
    </subcellularLocation>
</comment>
<comment type="domain">
    <text evidence="1">Consists of three domains: the N-terminal catalytic domain, the editing domain and the C-terminal anticodon-binding domain.</text>
</comment>
<comment type="similarity">
    <text evidence="1">Belongs to the class-II aminoacyl-tRNA synthetase family. ProS type 1 subfamily.</text>
</comment>
<feature type="chain" id="PRO_0000248642" description="Proline--tRNA ligase 1">
    <location>
        <begin position="1"/>
        <end position="566"/>
    </location>
</feature>
<sequence>MKQSMVFSPTLREVPADAEIKSHQLLLRAGFMRQNASGIYSFLPFGLKVLHKVERIVREEMERAGAVELLMPAMQAAELWQESGRWYSYGSELMRMKDRNAREFALGATHEEVITDLVRDEVKSYKKLPLTLYQIQTKFRDEQRPRFGLLRGREFLMKDAYSFHATQESLDEVYDRLYKAYSNIFARCGLNFRAVIADSGAMGGKDTHEFMVLSDVGEDTIAYSDTSDYAANIEMAPVVATYTKSDEAEKELEKVATPDQKAIEEVSAFLNIEADKCIKSMVFKVDEKLVVVLVRGDHEVNDVKVKNVYGASVVELASHEEVKELLNCEVGSLGPIGVNGDIEIIADHAVASIVNGCSGANEEGFHYVNVNPERDFKVSQYTDLRFIQEGDQSPDGNGTILFARGIEVGHVFKLGTRYSEAMNATFLDENGKTQPLIMGCYGIGVSRTVAAIAEQFNDENGLVWPKAVAPFHVHVIPVNMKSDAQREMGENIYNSLQEQGYEVLLDDRAERAGVKFADADLFGLPVRVTVGKKADEGIVEVKVRATGESEEVKVEELQTYIANILK</sequence>
<keyword id="KW-0030">Aminoacyl-tRNA synthetase</keyword>
<keyword id="KW-0067">ATP-binding</keyword>
<keyword id="KW-0963">Cytoplasm</keyword>
<keyword id="KW-0436">Ligase</keyword>
<keyword id="KW-0547">Nucleotide-binding</keyword>
<keyword id="KW-0648">Protein biosynthesis</keyword>
<keyword id="KW-1185">Reference proteome</keyword>